<dbReference type="EMBL" id="D45249">
    <property type="protein sequence ID" value="BAA08206.1"/>
    <property type="molecule type" value="mRNA"/>
</dbReference>
<dbReference type="SMR" id="Q63797"/>
<dbReference type="FunCoup" id="Q63797">
    <property type="interactions" value="1168"/>
</dbReference>
<dbReference type="STRING" id="10116.ENSRNOP00000025887"/>
<dbReference type="PhosphoSitePlus" id="Q63797"/>
<dbReference type="jPOST" id="Q63797"/>
<dbReference type="PaxDb" id="10116-ENSRNOP00000025887"/>
<dbReference type="UCSC" id="RGD:3429">
    <property type="organism name" value="rat"/>
</dbReference>
<dbReference type="AGR" id="RGD:3429"/>
<dbReference type="RGD" id="3429">
    <property type="gene designation" value="Psme1"/>
</dbReference>
<dbReference type="eggNOG" id="KOG4470">
    <property type="taxonomic scope" value="Eukaryota"/>
</dbReference>
<dbReference type="InParanoid" id="Q63797"/>
<dbReference type="PhylomeDB" id="Q63797"/>
<dbReference type="Reactome" id="R-RNO-9907900">
    <property type="pathway name" value="Proteasome assembly"/>
</dbReference>
<dbReference type="PRO" id="PR:Q63797"/>
<dbReference type="Proteomes" id="UP000002494">
    <property type="component" value="Unplaced"/>
</dbReference>
<dbReference type="GO" id="GO:0005737">
    <property type="term" value="C:cytoplasm"/>
    <property type="evidence" value="ECO:0000318"/>
    <property type="project" value="GO_Central"/>
</dbReference>
<dbReference type="GO" id="GO:0005654">
    <property type="term" value="C:nucleoplasm"/>
    <property type="evidence" value="ECO:0000318"/>
    <property type="project" value="GO_Central"/>
</dbReference>
<dbReference type="GO" id="GO:0008537">
    <property type="term" value="C:proteasome activator complex"/>
    <property type="evidence" value="ECO:0007669"/>
    <property type="project" value="InterPro"/>
</dbReference>
<dbReference type="GO" id="GO:0061133">
    <property type="term" value="F:endopeptidase activator activity"/>
    <property type="evidence" value="ECO:0000318"/>
    <property type="project" value="GO_Central"/>
</dbReference>
<dbReference type="GO" id="GO:0019884">
    <property type="term" value="P:antigen processing and presentation of exogenous antigen"/>
    <property type="evidence" value="ECO:0000266"/>
    <property type="project" value="RGD"/>
</dbReference>
<dbReference type="GO" id="GO:2000045">
    <property type="term" value="P:regulation of G1/S transition of mitotic cell cycle"/>
    <property type="evidence" value="ECO:0000318"/>
    <property type="project" value="GO_Central"/>
</dbReference>
<dbReference type="GO" id="GO:0061136">
    <property type="term" value="P:regulation of proteasomal protein catabolic process"/>
    <property type="evidence" value="ECO:0000318"/>
    <property type="project" value="GO_Central"/>
</dbReference>
<dbReference type="FunFam" id="1.20.120.180:FF:000002">
    <property type="entry name" value="Proteasome activator complex subunit 1"/>
    <property type="match status" value="1"/>
</dbReference>
<dbReference type="FunFam" id="1.20.5.120:FF:000001">
    <property type="entry name" value="Proteasome activator complex subunit 3"/>
    <property type="match status" value="1"/>
</dbReference>
<dbReference type="Gene3D" id="1.20.120.180">
    <property type="entry name" value="Proteasome activator pa28, C-terminal domain"/>
    <property type="match status" value="1"/>
</dbReference>
<dbReference type="Gene3D" id="1.20.5.120">
    <property type="entry name" value="Proteasome activator pa28, N-terminal domain"/>
    <property type="match status" value="1"/>
</dbReference>
<dbReference type="InterPro" id="IPR003186">
    <property type="entry name" value="PA28_C"/>
</dbReference>
<dbReference type="InterPro" id="IPR036997">
    <property type="entry name" value="PA28_C_sf"/>
</dbReference>
<dbReference type="InterPro" id="IPR036996">
    <property type="entry name" value="PA28_N_sf"/>
</dbReference>
<dbReference type="InterPro" id="IPR009077">
    <property type="entry name" value="Proteasome_activ_PA28"/>
</dbReference>
<dbReference type="InterPro" id="IPR003185">
    <property type="entry name" value="Proteasome_activ_PA28_N"/>
</dbReference>
<dbReference type="InterPro" id="IPR036252">
    <property type="entry name" value="Proteasome_activ_sf"/>
</dbReference>
<dbReference type="PANTHER" id="PTHR10660:SF5">
    <property type="entry name" value="PROTEASOME ACTIVATOR COMPLEX SUBUNIT 1"/>
    <property type="match status" value="1"/>
</dbReference>
<dbReference type="PANTHER" id="PTHR10660">
    <property type="entry name" value="PROTEASOME REGULATOR PA28"/>
    <property type="match status" value="1"/>
</dbReference>
<dbReference type="Pfam" id="PF02252">
    <property type="entry name" value="PA28_C"/>
    <property type="match status" value="1"/>
</dbReference>
<dbReference type="Pfam" id="PF02251">
    <property type="entry name" value="PA28_N"/>
    <property type="match status" value="1"/>
</dbReference>
<dbReference type="SUPFAM" id="SSF47216">
    <property type="entry name" value="Proteasome activator"/>
    <property type="match status" value="1"/>
</dbReference>
<keyword id="KW-0647">Proteasome</keyword>
<keyword id="KW-1185">Reference proteome</keyword>
<evidence type="ECO:0000250" key="1"/>
<evidence type="ECO:0000256" key="2">
    <source>
        <dbReference type="SAM" id="MobiDB-lite"/>
    </source>
</evidence>
<evidence type="ECO:0000305" key="3"/>
<reference key="1">
    <citation type="journal article" date="1995" name="FEBS Lett.">
        <title>Primary structures of two homologous subunits of PA28, a gamma-interferon-inducible protein activator of the 20S proteasome.</title>
        <authorList>
            <person name="Ahn J.Y."/>
            <person name="Tanahashi N."/>
            <person name="Akiyama K."/>
            <person name="Hisamatsu H."/>
            <person name="Noda C."/>
            <person name="Tanaka K."/>
            <person name="Chung C.H."/>
            <person name="Shibmara N."/>
            <person name="Willy P.J."/>
            <person name="Mott J.D."/>
            <person name="Slaughter C.A."/>
            <person name="DeMartino G.N."/>
        </authorList>
    </citation>
    <scope>NUCLEOTIDE SEQUENCE [MRNA]</scope>
</reference>
<comment type="function">
    <text>Implicated in immunoproteasome assembly and required for efficient antigen processing. The PA28 activator complex enhances the generation of class I binding peptides by altering the cleavage pattern of the proteasome.</text>
</comment>
<comment type="subunit">
    <text evidence="1">Heterodimer of PSME1 and PSME2, which forms a hexameric ring. PSME1 can form homoheptamers (By similarity).</text>
</comment>
<comment type="induction">
    <text>By interferon gamma.</text>
</comment>
<comment type="similarity">
    <text evidence="3">Belongs to the PA28 family.</text>
</comment>
<name>PSME1_RAT</name>
<accession>Q63797</accession>
<sequence>MATLRVHPEAQAKVDVFREDLCSKTENLLGSYFPKKISELDAFLKEPALNEANLSNLKAPLDIPVPDPVKEKEKEERKKQQEKEEKDEKKKGDEDDKGPPCGPVNCNEKIVVLLQRLKPEIKDVIEQLNLVTTWLQLQIPRIEDGNNFGVAVQAKVFELMTSLHTKLEGFQTQISKYFSERGDAVAKAAKQPHVGDYRQLVHELDEAEYQEIRLMVMEIRNAYAVLYDIILKNFEKLKKPRGETKGMIY</sequence>
<feature type="chain" id="PRO_0000161783" description="Proteasome activator complex subunit 1">
    <location>
        <begin position="1"/>
        <end position="249"/>
    </location>
</feature>
<feature type="region of interest" description="Disordered" evidence="2">
    <location>
        <begin position="60"/>
        <end position="102"/>
    </location>
</feature>
<feature type="compositionally biased region" description="Basic and acidic residues" evidence="2">
    <location>
        <begin position="68"/>
        <end position="98"/>
    </location>
</feature>
<proteinExistence type="evidence at transcript level"/>
<gene>
    <name type="primary">Psme1</name>
</gene>
<organism>
    <name type="scientific">Rattus norvegicus</name>
    <name type="common">Rat</name>
    <dbReference type="NCBI Taxonomy" id="10116"/>
    <lineage>
        <taxon>Eukaryota</taxon>
        <taxon>Metazoa</taxon>
        <taxon>Chordata</taxon>
        <taxon>Craniata</taxon>
        <taxon>Vertebrata</taxon>
        <taxon>Euteleostomi</taxon>
        <taxon>Mammalia</taxon>
        <taxon>Eutheria</taxon>
        <taxon>Euarchontoglires</taxon>
        <taxon>Glires</taxon>
        <taxon>Rodentia</taxon>
        <taxon>Myomorpha</taxon>
        <taxon>Muroidea</taxon>
        <taxon>Muridae</taxon>
        <taxon>Murinae</taxon>
        <taxon>Rattus</taxon>
    </lineage>
</organism>
<protein>
    <recommendedName>
        <fullName>Proteasome activator complex subunit 1</fullName>
    </recommendedName>
    <alternativeName>
        <fullName>11S regulator complex subunit alpha</fullName>
        <shortName>REG-alpha</shortName>
    </alternativeName>
    <alternativeName>
        <fullName>Activator of multicatalytic protease subunit 1</fullName>
    </alternativeName>
    <alternativeName>
        <fullName>Proteasome activator 28 subunit alpha</fullName>
        <shortName>PA28a</shortName>
        <shortName>PA28alpha</shortName>
    </alternativeName>
</protein>